<accession>P31116</accession>
<accession>D6VWV8</accession>
<dbReference type="EC" id="1.1.1.3" evidence="5"/>
<dbReference type="EMBL" id="X64457">
    <property type="protein sequence ID" value="CAA45787.1"/>
    <property type="molecule type" value="Genomic_DNA"/>
</dbReference>
<dbReference type="EMBL" id="Z49639">
    <property type="protein sequence ID" value="CAA89671.1"/>
    <property type="molecule type" value="Genomic_DNA"/>
</dbReference>
<dbReference type="EMBL" id="BK006943">
    <property type="protein sequence ID" value="DAA08924.1"/>
    <property type="molecule type" value="Genomic_DNA"/>
</dbReference>
<dbReference type="PIR" id="S33317">
    <property type="entry name" value="S33317"/>
</dbReference>
<dbReference type="RefSeq" id="NP_012673.3">
    <property type="nucleotide sequence ID" value="NM_001181797.3"/>
</dbReference>
<dbReference type="PDB" id="1EBF">
    <property type="method" value="X-ray"/>
    <property type="resolution" value="2.30 A"/>
    <property type="chains" value="A/B=2-359"/>
</dbReference>
<dbReference type="PDB" id="1EBU">
    <property type="method" value="X-ray"/>
    <property type="resolution" value="2.60 A"/>
    <property type="chains" value="A/B/C/D=2-359"/>
</dbReference>
<dbReference type="PDB" id="1Q7G">
    <property type="method" value="X-ray"/>
    <property type="resolution" value="2.60 A"/>
    <property type="chains" value="A/B=1-359"/>
</dbReference>
<dbReference type="PDB" id="1TVE">
    <property type="method" value="X-ray"/>
    <property type="resolution" value="3.00 A"/>
    <property type="chains" value="A/B=2-359"/>
</dbReference>
<dbReference type="PDBsum" id="1EBF"/>
<dbReference type="PDBsum" id="1EBU"/>
<dbReference type="PDBsum" id="1Q7G"/>
<dbReference type="PDBsum" id="1TVE"/>
<dbReference type="SMR" id="P31116"/>
<dbReference type="BioGRID" id="33895">
    <property type="interactions" value="546"/>
</dbReference>
<dbReference type="DIP" id="DIP-6315N"/>
<dbReference type="FunCoup" id="P31116">
    <property type="interactions" value="453"/>
</dbReference>
<dbReference type="IntAct" id="P31116">
    <property type="interactions" value="23"/>
</dbReference>
<dbReference type="MINT" id="P31116"/>
<dbReference type="STRING" id="4932.YJR139C"/>
<dbReference type="GlyGen" id="P31116">
    <property type="glycosylation" value="1 site"/>
</dbReference>
<dbReference type="iPTMnet" id="P31116"/>
<dbReference type="PaxDb" id="4932-YJR139C"/>
<dbReference type="PeptideAtlas" id="P31116"/>
<dbReference type="TopDownProteomics" id="P31116"/>
<dbReference type="EnsemblFungi" id="YJR139C_mRNA">
    <property type="protein sequence ID" value="YJR139C"/>
    <property type="gene ID" value="YJR139C"/>
</dbReference>
<dbReference type="GeneID" id="853604"/>
<dbReference type="KEGG" id="sce:YJR139C"/>
<dbReference type="AGR" id="SGD:S000003900"/>
<dbReference type="SGD" id="S000003900">
    <property type="gene designation" value="HOM6"/>
</dbReference>
<dbReference type="VEuPathDB" id="FungiDB:YJR139C"/>
<dbReference type="eggNOG" id="KOG0455">
    <property type="taxonomic scope" value="Eukaryota"/>
</dbReference>
<dbReference type="GeneTree" id="ENSGT00940000176517"/>
<dbReference type="HOGENOM" id="CLU_009116_0_1_1"/>
<dbReference type="InParanoid" id="P31116"/>
<dbReference type="OMA" id="IYTRCYS"/>
<dbReference type="OrthoDB" id="67851at2759"/>
<dbReference type="BioCyc" id="YEAST:YJR139C-MONOMER"/>
<dbReference type="BRENDA" id="1.1.1.3">
    <property type="organism ID" value="984"/>
</dbReference>
<dbReference type="SABIO-RK" id="P31116"/>
<dbReference type="UniPathway" id="UPA00050">
    <property type="reaction ID" value="UER00063"/>
</dbReference>
<dbReference type="UniPathway" id="UPA00051">
    <property type="reaction ID" value="UER00465"/>
</dbReference>
<dbReference type="BioGRID-ORCS" id="853604">
    <property type="hits" value="2 hits in 10 CRISPR screens"/>
</dbReference>
<dbReference type="EvolutionaryTrace" id="P31116"/>
<dbReference type="PRO" id="PR:P31116"/>
<dbReference type="Proteomes" id="UP000002311">
    <property type="component" value="Chromosome X"/>
</dbReference>
<dbReference type="RNAct" id="P31116">
    <property type="molecule type" value="protein"/>
</dbReference>
<dbReference type="GO" id="GO:0005737">
    <property type="term" value="C:cytoplasm"/>
    <property type="evidence" value="ECO:0007005"/>
    <property type="project" value="SGD"/>
</dbReference>
<dbReference type="GO" id="GO:0005634">
    <property type="term" value="C:nucleus"/>
    <property type="evidence" value="ECO:0007005"/>
    <property type="project" value="SGD"/>
</dbReference>
<dbReference type="GO" id="GO:0004412">
    <property type="term" value="F:homoserine dehydrogenase activity"/>
    <property type="evidence" value="ECO:0000314"/>
    <property type="project" value="UniProtKB"/>
</dbReference>
<dbReference type="GO" id="GO:0070403">
    <property type="term" value="F:NAD+ binding"/>
    <property type="evidence" value="ECO:0000314"/>
    <property type="project" value="UniProtKB"/>
</dbReference>
<dbReference type="GO" id="GO:0050661">
    <property type="term" value="F:NADP binding"/>
    <property type="evidence" value="ECO:0007669"/>
    <property type="project" value="InterPro"/>
</dbReference>
<dbReference type="GO" id="GO:0009067">
    <property type="term" value="P:aspartate family amino acid biosynthetic process"/>
    <property type="evidence" value="ECO:0000318"/>
    <property type="project" value="GO_Central"/>
</dbReference>
<dbReference type="GO" id="GO:0009090">
    <property type="term" value="P:homoserine biosynthetic process"/>
    <property type="evidence" value="ECO:0000315"/>
    <property type="project" value="SGD"/>
</dbReference>
<dbReference type="GO" id="GO:0009086">
    <property type="term" value="P:methionine biosynthetic process"/>
    <property type="evidence" value="ECO:0000314"/>
    <property type="project" value="UniProtKB"/>
</dbReference>
<dbReference type="GO" id="GO:0009088">
    <property type="term" value="P:threonine biosynthetic process"/>
    <property type="evidence" value="ECO:0000314"/>
    <property type="project" value="UniProtKB"/>
</dbReference>
<dbReference type="FunFam" id="3.30.360.10:FF:000006">
    <property type="entry name" value="Bifunctional aspartokinase/homoserine dehydrogenase"/>
    <property type="match status" value="1"/>
</dbReference>
<dbReference type="FunFam" id="3.40.50.720:FF:000345">
    <property type="entry name" value="Homoserine dehydrogenase"/>
    <property type="match status" value="1"/>
</dbReference>
<dbReference type="Gene3D" id="3.30.360.10">
    <property type="entry name" value="Dihydrodipicolinate Reductase, domain 2"/>
    <property type="match status" value="1"/>
</dbReference>
<dbReference type="Gene3D" id="3.40.50.720">
    <property type="entry name" value="NAD(P)-binding Rossmann-like Domain"/>
    <property type="match status" value="1"/>
</dbReference>
<dbReference type="InterPro" id="IPR005106">
    <property type="entry name" value="Asp/hSer_DH_NAD-bd"/>
</dbReference>
<dbReference type="InterPro" id="IPR011147">
    <property type="entry name" value="Bifunc_Aspkin/hSer_DH"/>
</dbReference>
<dbReference type="InterPro" id="IPR001342">
    <property type="entry name" value="HDH_cat"/>
</dbReference>
<dbReference type="InterPro" id="IPR019811">
    <property type="entry name" value="HDH_CS"/>
</dbReference>
<dbReference type="InterPro" id="IPR022697">
    <property type="entry name" value="HDH_short"/>
</dbReference>
<dbReference type="InterPro" id="IPR036291">
    <property type="entry name" value="NAD(P)-bd_dom_sf"/>
</dbReference>
<dbReference type="PANTHER" id="PTHR43070">
    <property type="match status" value="1"/>
</dbReference>
<dbReference type="PANTHER" id="PTHR43070:SF5">
    <property type="entry name" value="HOMOSERINE DEHYDROGENASE"/>
    <property type="match status" value="1"/>
</dbReference>
<dbReference type="Pfam" id="PF00742">
    <property type="entry name" value="Homoserine_dh"/>
    <property type="match status" value="1"/>
</dbReference>
<dbReference type="Pfam" id="PF03447">
    <property type="entry name" value="NAD_binding_3"/>
    <property type="match status" value="1"/>
</dbReference>
<dbReference type="PIRSF" id="PIRSF036497">
    <property type="entry name" value="HDH_short"/>
    <property type="match status" value="1"/>
</dbReference>
<dbReference type="SUPFAM" id="SSF55347">
    <property type="entry name" value="Glyceraldehyde-3-phosphate dehydrogenase-like, C-terminal domain"/>
    <property type="match status" value="1"/>
</dbReference>
<dbReference type="SUPFAM" id="SSF51735">
    <property type="entry name" value="NAD(P)-binding Rossmann-fold domains"/>
    <property type="match status" value="1"/>
</dbReference>
<dbReference type="PROSITE" id="PS01042">
    <property type="entry name" value="HOMOSER_DHGENASE"/>
    <property type="match status" value="1"/>
</dbReference>
<name>DHOM_YEAST</name>
<organism>
    <name type="scientific">Saccharomyces cerevisiae (strain ATCC 204508 / S288c)</name>
    <name type="common">Baker's yeast</name>
    <dbReference type="NCBI Taxonomy" id="559292"/>
    <lineage>
        <taxon>Eukaryota</taxon>
        <taxon>Fungi</taxon>
        <taxon>Dikarya</taxon>
        <taxon>Ascomycota</taxon>
        <taxon>Saccharomycotina</taxon>
        <taxon>Saccharomycetes</taxon>
        <taxon>Saccharomycetales</taxon>
        <taxon>Saccharomycetaceae</taxon>
        <taxon>Saccharomyces</taxon>
    </lineage>
</organism>
<reference key="1">
    <citation type="journal article" date="1993" name="FEBS Lett.">
        <title>Evolutionary relationships between yeast and bacterial homoserine dehydrogenases.</title>
        <authorList>
            <person name="Thomas D."/>
            <person name="Barbey R."/>
            <person name="Surdin-Kerjan Y."/>
        </authorList>
    </citation>
    <scope>NUCLEOTIDE SEQUENCE [GENOMIC DNA]</scope>
    <source>
        <strain>ATCC 26786 / X2180-1A</strain>
    </source>
</reference>
<reference key="2">
    <citation type="journal article" date="1996" name="EMBO J.">
        <title>Complete nucleotide sequence of Saccharomyces cerevisiae chromosome X.</title>
        <authorList>
            <person name="Galibert F."/>
            <person name="Alexandraki D."/>
            <person name="Baur A."/>
            <person name="Boles E."/>
            <person name="Chalwatzis N."/>
            <person name="Chuat J.-C."/>
            <person name="Coster F."/>
            <person name="Cziepluch C."/>
            <person name="de Haan M."/>
            <person name="Domdey H."/>
            <person name="Durand P."/>
            <person name="Entian K.-D."/>
            <person name="Gatius M."/>
            <person name="Goffeau A."/>
            <person name="Grivell L.A."/>
            <person name="Hennemann A."/>
            <person name="Herbert C.J."/>
            <person name="Heumann K."/>
            <person name="Hilger F."/>
            <person name="Hollenberg C.P."/>
            <person name="Huang M.-E."/>
            <person name="Jacq C."/>
            <person name="Jauniaux J.-C."/>
            <person name="Katsoulou C."/>
            <person name="Kirchrath L."/>
            <person name="Kleine K."/>
            <person name="Kordes E."/>
            <person name="Koetter P."/>
            <person name="Liebl S."/>
            <person name="Louis E.J."/>
            <person name="Manus V."/>
            <person name="Mewes H.-W."/>
            <person name="Miosga T."/>
            <person name="Obermaier B."/>
            <person name="Perea J."/>
            <person name="Pohl T.M."/>
            <person name="Portetelle D."/>
            <person name="Pujol A."/>
            <person name="Purnelle B."/>
            <person name="Ramezani Rad M."/>
            <person name="Rasmussen S.W."/>
            <person name="Rose M."/>
            <person name="Rossau R."/>
            <person name="Schaaff-Gerstenschlaeger I."/>
            <person name="Smits P.H.M."/>
            <person name="Scarcez T."/>
            <person name="Soriano N."/>
            <person name="To Van D."/>
            <person name="Tzermia M."/>
            <person name="Van Broekhoven A."/>
            <person name="Vandenbol M."/>
            <person name="Wedler H."/>
            <person name="von Wettstein D."/>
            <person name="Wambutt R."/>
            <person name="Zagulski M."/>
            <person name="Zollner A."/>
            <person name="Karpfinger-Hartl L."/>
        </authorList>
    </citation>
    <scope>NUCLEOTIDE SEQUENCE [LARGE SCALE GENOMIC DNA]</scope>
    <source>
        <strain>ATCC 204508 / S288c</strain>
    </source>
</reference>
<reference key="3">
    <citation type="journal article" date="2014" name="G3 (Bethesda)">
        <title>The reference genome sequence of Saccharomyces cerevisiae: Then and now.</title>
        <authorList>
            <person name="Engel S.R."/>
            <person name="Dietrich F.S."/>
            <person name="Fisk D.G."/>
            <person name="Binkley G."/>
            <person name="Balakrishnan R."/>
            <person name="Costanzo M.C."/>
            <person name="Dwight S.S."/>
            <person name="Hitz B.C."/>
            <person name="Karra K."/>
            <person name="Nash R.S."/>
            <person name="Weng S."/>
            <person name="Wong E.D."/>
            <person name="Lloyd P."/>
            <person name="Skrzypek M.S."/>
            <person name="Miyasato S.R."/>
            <person name="Simison M."/>
            <person name="Cherry J.M."/>
        </authorList>
    </citation>
    <scope>GENOME REANNOTATION</scope>
    <source>
        <strain>ATCC 204508 / S288c</strain>
    </source>
</reference>
<reference key="4">
    <citation type="journal article" date="1991" name="Arch. Biochem. Biophys.">
        <title>Rapid purification and characterization of homoserine dehydrogenase from Saccharomyces cerevisiae.</title>
        <authorList>
            <person name="Yumoto N."/>
            <person name="Kawata Y."/>
            <person name="Noda S."/>
            <person name="Tokushige M."/>
        </authorList>
    </citation>
    <scope>PROTEIN SEQUENCE OF 129-158 AND 327-354</scope>
</reference>
<reference key="5">
    <citation type="journal article" date="2001" name="Biochim. Biophys. Acta">
        <title>Characterization of yeast homoserine dehydrogenase, an antifungal target: the invariant histidine 309 is important for enzyme integrity.</title>
        <authorList>
            <person name="Jacques S.L."/>
            <person name="Nieman C."/>
            <person name="Bareich D."/>
            <person name="Broadhead G."/>
            <person name="Kinach R."/>
            <person name="Honek J.F."/>
            <person name="Wright G.D."/>
        </authorList>
    </citation>
    <scope>FUNCTION</scope>
    <scope>CATALYTIC ACTIVITY</scope>
    <scope>BIOPHYSICOCHEMICAL PROPERTIES</scope>
    <scope>PATHWAY</scope>
    <scope>SUBUNIT</scope>
    <scope>MUTAGENESIS OF HIS-79 AND HIS-309</scope>
</reference>
<reference key="6">
    <citation type="journal article" date="2003" name="Nature">
        <title>Global analysis of protein expression in yeast.</title>
        <authorList>
            <person name="Ghaemmaghami S."/>
            <person name="Huh W.-K."/>
            <person name="Bower K."/>
            <person name="Howson R.W."/>
            <person name="Belle A."/>
            <person name="Dephoure N."/>
            <person name="O'Shea E.K."/>
            <person name="Weissman J.S."/>
        </authorList>
    </citation>
    <scope>LEVEL OF PROTEIN EXPRESSION [LARGE SCALE ANALYSIS]</scope>
</reference>
<reference key="7">
    <citation type="journal article" date="2007" name="J. Proteome Res.">
        <title>Large-scale phosphorylation analysis of alpha-factor-arrested Saccharomyces cerevisiae.</title>
        <authorList>
            <person name="Li X."/>
            <person name="Gerber S.A."/>
            <person name="Rudner A.D."/>
            <person name="Beausoleil S.A."/>
            <person name="Haas W."/>
            <person name="Villen J."/>
            <person name="Elias J.E."/>
            <person name="Gygi S.P."/>
        </authorList>
    </citation>
    <scope>IDENTIFICATION BY MASS SPECTROMETRY [LARGE SCALE ANALYSIS]</scope>
    <source>
        <strain>ADR376</strain>
    </source>
</reference>
<reference key="8">
    <citation type="journal article" date="2008" name="Mol. Cell. Proteomics">
        <title>A multidimensional chromatography technology for in-depth phosphoproteome analysis.</title>
        <authorList>
            <person name="Albuquerque C.P."/>
            <person name="Smolka M.B."/>
            <person name="Payne S.H."/>
            <person name="Bafna V."/>
            <person name="Eng J."/>
            <person name="Zhou H."/>
        </authorList>
    </citation>
    <scope>IDENTIFICATION BY MASS SPECTROMETRY [LARGE SCALE ANALYSIS]</scope>
</reference>
<reference key="9">
    <citation type="journal article" date="2012" name="Proteomics">
        <title>Sites of ubiquitin attachment in Saccharomyces cerevisiae.</title>
        <authorList>
            <person name="Starita L.M."/>
            <person name="Lo R.S."/>
            <person name="Eng J.K."/>
            <person name="von Haller P.D."/>
            <person name="Fields S."/>
        </authorList>
    </citation>
    <scope>UBIQUITINATION [LARGE SCALE ANALYSIS] AT LYS-290</scope>
    <scope>IDENTIFICATION BY MASS SPECTROMETRY [LARGE SCALE ANALYSIS]</scope>
</reference>
<reference evidence="12 13" key="10">
    <citation type="journal article" date="2000" name="Nat. Struct. Biol.">
        <title>Crystal structures of homoserine dehydrogenase suggest a novel catalytic mechanism for oxidoreductases.</title>
        <authorList>
            <person name="DeLaBarre B."/>
            <person name="Thompson P.R."/>
            <person name="Wright G.D."/>
            <person name="Berghuis A.M."/>
        </authorList>
    </citation>
    <scope>X-RAY CRYSTALLOGRAPHY (2.3 ANGSTROMS) OF 2-359 IN COMPLEX WITH NAD; L-HOMOSERINE AND SODIUM</scope>
    <scope>COFACTOR</scope>
    <scope>MUTAGENESIS OF LYS-117; GLU-208; ASP-219 AND LYS-223</scope>
</reference>
<reference evidence="14" key="11">
    <citation type="journal article" date="2003" name="Chem. Biol.">
        <title>Enzyme-assisted suicide: molecular basis for the antifungal activity of 5-hydroxy-4-oxonorvaline by potent inhibition of homoserine dehydrogenase.</title>
        <authorList>
            <person name="Jacques S.L."/>
            <person name="Mirza I.A."/>
            <person name="Ejim L."/>
            <person name="Koteva K."/>
            <person name="Hughes D.W."/>
            <person name="Green K."/>
            <person name="Kinach R."/>
            <person name="Honek J.F."/>
            <person name="Lai H.K."/>
            <person name="Berghuis A.M."/>
            <person name="Wright G.D."/>
        </authorList>
    </citation>
    <scope>X-RAY CRYSTALLOGRAPHY (2.6 ANGSTROMS) IN COMPLEX WITH INHIBITOR AND SODIUM</scope>
</reference>
<reference evidence="15" key="12">
    <citation type="journal article" date="2004" name="Bioorg. Med. Chem.">
        <title>New phenolic inhibitors of yeast homoserine dehydrogenase.</title>
        <authorList>
            <person name="Ejim L."/>
            <person name="Mirza I.A."/>
            <person name="Capone C."/>
            <person name="Nazi I."/>
            <person name="Jenkins S."/>
            <person name="Chee G.-L."/>
            <person name="Berghuis A.M."/>
            <person name="Wright G.D."/>
        </authorList>
    </citation>
    <scope>X-RAY CRYSTALLOGRAPHY (3.0 ANGSTROMS) OF 2-359 IN COMPLEX WITH INHIBITORS</scope>
</reference>
<sequence length="359" mass="38502">MSTKVVNVAVIGAGVVGSAFLDQLLAMKSTITYNLVLLAEAERSLISKDFSPLNVGSDWKAALAASTTKTLPLDDLIAHLKTSPKPVILVDNTSSAYIAGFYTKFVENGISIATPNKKAFSSDLATWKALFSNKPTNGFVYHEATVGAGLPIISFLREIIQTGDEVEKIEGIFSGTLSYIFNEFSTSQANDVKFSDVVKVAKKLGYTEPDPRDDLNGLDVARKVTIVGRISGVEVESPTSFPVQSLIPKPLESVKSADEFLEKLSDYDKDLTQLKKEAATENKVLRFIGKVDVATKSVSVGIEKYDYSHPFASLKGSDNVISIKTKRYTNPVVIQGAGAGAAVTAAGVLGDVIKIAQRL</sequence>
<protein>
    <recommendedName>
        <fullName>Homoserine dehydrogenase</fullName>
        <shortName>HDH</shortName>
        <shortName evidence="9">HSD</shortName>
        <ecNumber evidence="5">1.1.1.3</ecNumber>
    </recommendedName>
</protein>
<comment type="function">
    <text evidence="5">Catalyzes the conversion of L-aspartate-beta-semialdehyde (L-Asa) to L-homoserine (L-Hse), the third step in the biosynthesis of amino acids that derive from aspartate (the aspartate family of amino acids), including methioinine and threonine, the latter of which is a precursor to isoleucine; production of homoserine leads to a branch-point in the pathway as it can either be O-phosphorylated for processing to threonine, or O-acylated for processing to methionine.</text>
</comment>
<comment type="catalytic activity">
    <reaction evidence="5">
        <text>L-homoserine + NADP(+) = L-aspartate 4-semialdehyde + NADPH + H(+)</text>
        <dbReference type="Rhea" id="RHEA:15761"/>
        <dbReference type="ChEBI" id="CHEBI:15378"/>
        <dbReference type="ChEBI" id="CHEBI:57476"/>
        <dbReference type="ChEBI" id="CHEBI:57783"/>
        <dbReference type="ChEBI" id="CHEBI:58349"/>
        <dbReference type="ChEBI" id="CHEBI:537519"/>
        <dbReference type="EC" id="1.1.1.3"/>
    </reaction>
    <physiologicalReaction direction="right-to-left" evidence="5">
        <dbReference type="Rhea" id="RHEA:15763"/>
    </physiologicalReaction>
</comment>
<comment type="catalytic activity">
    <reaction evidence="5">
        <text>L-homoserine + NAD(+) = L-aspartate 4-semialdehyde + NADH + H(+)</text>
        <dbReference type="Rhea" id="RHEA:15757"/>
        <dbReference type="ChEBI" id="CHEBI:15378"/>
        <dbReference type="ChEBI" id="CHEBI:57476"/>
        <dbReference type="ChEBI" id="CHEBI:57540"/>
        <dbReference type="ChEBI" id="CHEBI:57945"/>
        <dbReference type="ChEBI" id="CHEBI:537519"/>
        <dbReference type="EC" id="1.1.1.3"/>
    </reaction>
    <physiologicalReaction direction="right-to-left" evidence="5">
        <dbReference type="Rhea" id="RHEA:15759"/>
    </physiologicalReaction>
</comment>
<comment type="cofactor">
    <cofactor evidence="4">
        <name>a metal cation</name>
        <dbReference type="ChEBI" id="CHEBI:25213"/>
    </cofactor>
    <text evidence="4">A sodium ion is seen in the structure; a metal ion may subtly affect the relative position of the nucleotide-binding region to influence enzyme activity, and could increase the stability of the enzyme.</text>
</comment>
<comment type="biophysicochemical properties">
    <kinetics>
        <KM evidence="5">0.186 mM for L-aspartate semialdehyde as variable substrate and NADPH as saturating substrate (at pH 7.5 and at 25 degrees Celsius)</KM>
        <KM evidence="5">0.234 mM for L-aspartate semialdehyde as variable substrate and NADH as saturating substrate (at pH 7.5 and at 25 degrees Celsius)</KM>
        <KM evidence="5">0.028 mM for NADPH as variable substrate and L-aspartate semialdehyde as saturating substrate (at pH 7.5 and at 25 degrees Celsius)</KM>
        <KM evidence="5">0.007 mM for NADH as variable substrate and L-aspartate semialdehyde as saturating substrate (at pH 7.5 and at 25 degrees Celsius)</KM>
        <KM evidence="5">1.704 mM for L-homoserine as variable substrate and NADP+ as saturating substrate (at pH 9.5 and at 25 degrees Celsius)</KM>
        <KM evidence="5">1.034 mM for L-homoserine as variable substrate and NAD+ as saturating substrate (at pH 9.5 and at 25 degrees Celsius)</KM>
        <KM evidence="5">0.743 mM for NADP+ as variable substrate and L-homoserine as saturating substrate (at pH 9.5 and at 25 degrees Celsius)</KM>
        <KM evidence="5">0.052 mM for NAD+ as variable substrate and L-homoserine as saturating substrate (at pH 9.5 and at 25 degrees Celsius)</KM>
        <text evidence="5">kcat is 530 for L-aspartate semialdehyde as variable substrate and NADPH as saturating substrate (at pH 7.5 and at 25 degrees Celsius) (PubMed:11341914). kcat is 563 for L-aspartate semialdehyde as variable substrate and NADH as saturating substrate (at pH 7.5 and at 25 degrees Celsius) (PubMed:11341914). kcat is 521 for NADPH as variable substrate and L-aspartate semialdehyde as saturating substrate (at pH 7.5 and at 25 degrees Celsius) (PubMed:11341914). kcat is 368 for NADH as variable substrate and L-aspartate semialdehyde as saturating substrate (at pH 7.5 and at 25 degrees Celsius) (PubMed:11341914). kcat is 17.2 for L-homoserine as variable substrate and NADP+ as saturating substrate (at pH 9.5 and at 25 degrees Celsius) (PubMed:11341914). kcat is 21.9 for L-homoserine as variable substrate and NAD+ as saturating substrate (at pH 9.5 and at 25 degrees Celsius) (PubMed:11341914). kcat is 16.6 for NADP+ as variable substrate and L-homoserine as saturating substrate (at pH 9.5 and at 25 degrees Celsius) (PubMed:11341914). kcat is 17.3 for NAD+ as variable substrate and L-homoserine as saturating substrate (at pH 9.5 and at 25 degrees Celsius) (PubMed:11341914).</text>
    </kinetics>
    <phDependence>
        <text evidence="5">Optimum pH is 7.5 in the forward direction (PubMed:11341914). Optimum pH is 9.5 in the reverse direction (PubMed:11341914).</text>
    </phDependence>
</comment>
<comment type="pathway">
    <text evidence="11">Amino-acid biosynthesis; L-methionine biosynthesis via de novo pathway; L-homoserine from L-aspartate: step 3/3.</text>
</comment>
<comment type="pathway">
    <text evidence="11">Amino-acid biosynthesis; L-threonine biosynthesis; L-threonine from L-aspartate: step 3/5.</text>
</comment>
<comment type="subunit">
    <text evidence="4 5 7 8">Homodimer.</text>
</comment>
<comment type="miscellaneous">
    <text evidence="6">Present with 48900 molecules/cell in log phase SD medium.</text>
</comment>
<comment type="similarity">
    <text evidence="10">Belongs to the homoserine dehydrogenase family.</text>
</comment>
<proteinExistence type="evidence at protein level"/>
<gene>
    <name type="primary">HOM6</name>
    <name type="ordered locus">YJR139C</name>
    <name type="ORF">J2132</name>
</gene>
<evidence type="ECO:0000250" key="1">
    <source>
        <dbReference type="UniProtKB" id="F9VNG5"/>
    </source>
</evidence>
<evidence type="ECO:0000250" key="2">
    <source>
        <dbReference type="UniProtKB" id="O58802"/>
    </source>
</evidence>
<evidence type="ECO:0000255" key="3">
    <source>
        <dbReference type="PIRSR" id="PIRSR036497-1"/>
    </source>
</evidence>
<evidence type="ECO:0000269" key="4">
    <source>
    </source>
</evidence>
<evidence type="ECO:0000269" key="5">
    <source>
    </source>
</evidence>
<evidence type="ECO:0000269" key="6">
    <source>
    </source>
</evidence>
<evidence type="ECO:0000269" key="7">
    <source>
    </source>
</evidence>
<evidence type="ECO:0000269" key="8">
    <source>
    </source>
</evidence>
<evidence type="ECO:0000303" key="9">
    <source>
    </source>
</evidence>
<evidence type="ECO:0000305" key="10"/>
<evidence type="ECO:0000305" key="11">
    <source>
    </source>
</evidence>
<evidence type="ECO:0007744" key="12">
    <source>
        <dbReference type="PDB" id="1EBF"/>
    </source>
</evidence>
<evidence type="ECO:0007744" key="13">
    <source>
        <dbReference type="PDB" id="1EBU"/>
    </source>
</evidence>
<evidence type="ECO:0007744" key="14">
    <source>
        <dbReference type="PDB" id="1Q7G"/>
    </source>
</evidence>
<evidence type="ECO:0007744" key="15">
    <source>
        <dbReference type="PDB" id="1TVE"/>
    </source>
</evidence>
<evidence type="ECO:0007744" key="16">
    <source>
    </source>
</evidence>
<evidence type="ECO:0007829" key="17">
    <source>
        <dbReference type="PDB" id="1EBF"/>
    </source>
</evidence>
<evidence type="ECO:0007829" key="18">
    <source>
        <dbReference type="PDB" id="1EBU"/>
    </source>
</evidence>
<evidence type="ECO:0007829" key="19">
    <source>
        <dbReference type="PDB" id="1TVE"/>
    </source>
</evidence>
<feature type="chain" id="PRO_0000066707" description="Homoserine dehydrogenase">
    <location>
        <begin position="1"/>
        <end position="359"/>
    </location>
</feature>
<feature type="active site" description="Proton donor" evidence="3">
    <location>
        <position position="223"/>
    </location>
</feature>
<feature type="binding site" evidence="4 12 13">
    <location>
        <position position="13"/>
    </location>
    <ligand>
        <name>NAD(+)</name>
        <dbReference type="ChEBI" id="CHEBI:57540"/>
    </ligand>
</feature>
<feature type="binding site" evidence="4 12 13">
    <location>
        <position position="15"/>
    </location>
    <ligand>
        <name>NAD(+)</name>
        <dbReference type="ChEBI" id="CHEBI:57540"/>
    </ligand>
</feature>
<feature type="binding site" evidence="4 12 13">
    <location>
        <position position="16"/>
    </location>
    <ligand>
        <name>NAD(+)</name>
        <dbReference type="ChEBI" id="CHEBI:57540"/>
    </ligand>
</feature>
<feature type="binding site" evidence="1">
    <location>
        <position position="16"/>
    </location>
    <ligand>
        <name>NADP(+)</name>
        <dbReference type="ChEBI" id="CHEBI:58349"/>
    </ligand>
</feature>
<feature type="binding site" evidence="2">
    <location>
        <position position="16"/>
    </location>
    <ligand>
        <name>NADPH</name>
        <dbReference type="ChEBI" id="CHEBI:57783"/>
    </ligand>
</feature>
<feature type="binding site" evidence="4 12">
    <location>
        <position position="41"/>
    </location>
    <ligand>
        <name>NAD(+)</name>
        <dbReference type="ChEBI" id="CHEBI:57540"/>
    </ligand>
</feature>
<feature type="binding site" evidence="2">
    <location>
        <position position="60"/>
    </location>
    <ligand>
        <name>NADPH</name>
        <dbReference type="ChEBI" id="CHEBI:57783"/>
    </ligand>
</feature>
<feature type="binding site" evidence="4 12">
    <location>
        <position position="93"/>
    </location>
    <ligand>
        <name>NAD(+)</name>
        <dbReference type="ChEBI" id="CHEBI:57540"/>
    </ligand>
</feature>
<feature type="binding site" evidence="1">
    <location>
        <position position="93"/>
    </location>
    <ligand>
        <name>NADP(+)</name>
        <dbReference type="ChEBI" id="CHEBI:58349"/>
    </ligand>
</feature>
<feature type="binding site" evidence="2">
    <location>
        <position position="93"/>
    </location>
    <ligand>
        <name>NADPH</name>
        <dbReference type="ChEBI" id="CHEBI:57783"/>
    </ligand>
</feature>
<feature type="binding site" evidence="2">
    <location>
        <position position="94"/>
    </location>
    <ligand>
        <name>NADPH</name>
        <dbReference type="ChEBI" id="CHEBI:57783"/>
    </ligand>
</feature>
<feature type="binding site" evidence="1">
    <location>
        <position position="117"/>
    </location>
    <ligand>
        <name>NADP(+)</name>
        <dbReference type="ChEBI" id="CHEBI:58349"/>
    </ligand>
</feature>
<feature type="binding site" evidence="2">
    <location>
        <position position="117"/>
    </location>
    <ligand>
        <name>NADPH</name>
        <dbReference type="ChEBI" id="CHEBI:57783"/>
    </ligand>
</feature>
<feature type="binding site" evidence="4 7 12 13 14">
    <location>
        <position position="143"/>
    </location>
    <ligand>
        <name>Na(+)</name>
        <dbReference type="ChEBI" id="CHEBI:29101"/>
    </ligand>
</feature>
<feature type="binding site" evidence="4 7 12 13 14">
    <location>
        <position position="146"/>
    </location>
    <ligand>
        <name>Na(+)</name>
        <dbReference type="ChEBI" id="CHEBI:29101"/>
    </ligand>
</feature>
<feature type="binding site" evidence="4 12 13">
    <location>
        <position position="148"/>
    </location>
    <ligand>
        <name>Na(+)</name>
        <dbReference type="ChEBI" id="CHEBI:29101"/>
    </ligand>
</feature>
<feature type="binding site" evidence="4 7 12 13 14">
    <location>
        <position position="150"/>
    </location>
    <ligand>
        <name>Na(+)</name>
        <dbReference type="ChEBI" id="CHEBI:29101"/>
    </ligand>
</feature>
<feature type="binding site" evidence="1">
    <location>
        <position position="205"/>
    </location>
    <ligand>
        <name>NADP(+)</name>
        <dbReference type="ChEBI" id="CHEBI:58349"/>
    </ligand>
</feature>
<feature type="binding site" evidence="4 13">
    <location>
        <position position="208"/>
    </location>
    <ligand>
        <name>L-homoserine</name>
        <dbReference type="ChEBI" id="CHEBI:57476"/>
    </ligand>
</feature>
<feature type="binding site" evidence="1">
    <location>
        <position position="208"/>
    </location>
    <ligand>
        <name>NADP(+)</name>
        <dbReference type="ChEBI" id="CHEBI:58349"/>
    </ligand>
</feature>
<feature type="binding site" evidence="4 13">
    <location>
        <position position="219"/>
    </location>
    <ligand>
        <name>L-homoserine</name>
        <dbReference type="ChEBI" id="CHEBI:57476"/>
    </ligand>
</feature>
<feature type="binding site" evidence="4 12">
    <location>
        <position position="340"/>
    </location>
    <ligand>
        <name>NAD(+)</name>
        <dbReference type="ChEBI" id="CHEBI:57540"/>
    </ligand>
</feature>
<feature type="binding site" evidence="1">
    <location>
        <position position="340"/>
    </location>
    <ligand>
        <name>NADP(+)</name>
        <dbReference type="ChEBI" id="CHEBI:58349"/>
    </ligand>
</feature>
<feature type="binding site" evidence="2">
    <location>
        <position position="340"/>
    </location>
    <ligand>
        <name>NADPH</name>
        <dbReference type="ChEBI" id="CHEBI:57783"/>
    </ligand>
</feature>
<feature type="cross-link" description="Glycyl lysine isopeptide (Lys-Gly) (interchain with G-Cter in ubiquitin)" evidence="16">
    <location>
        <position position="290"/>
    </location>
</feature>
<feature type="mutagenesis site" description="Reduces kcat 2-fold." evidence="5">
    <original>H</original>
    <variation>A</variation>
    <location>
        <position position="79"/>
    </location>
</feature>
<feature type="mutagenesis site" description="Loss of activity." evidence="4">
    <original>K</original>
    <variation>A</variation>
    <location>
        <position position="117"/>
    </location>
</feature>
<feature type="mutagenesis site" description="Increases KM for aspartate-semialdehyde 48-fold and reduces kcat by 50%." evidence="4">
    <original>E</original>
    <variation>D</variation>
    <location>
        <position position="208"/>
    </location>
</feature>
<feature type="mutagenesis site" description="Loss of activity." evidence="4">
    <original>E</original>
    <variation>L</variation>
    <variation>Q</variation>
    <location>
        <position position="208"/>
    </location>
</feature>
<feature type="mutagenesis site" description="Reduces kcat 150-fold." evidence="4">
    <original>D</original>
    <variation>L</variation>
    <location>
        <position position="219"/>
    </location>
</feature>
<feature type="mutagenesis site" description="Loss of activity." evidence="4">
    <original>K</original>
    <variation>V</variation>
    <location>
        <position position="223"/>
    </location>
</feature>
<feature type="mutagenesis site" description="Reduces kcat 40-fold. Affects dimer formation." evidence="5">
    <original>H</original>
    <variation>A</variation>
    <location>
        <position position="309"/>
    </location>
</feature>
<feature type="sequence conflict" description="In Ref. 4; AA sequence." evidence="10" ref="4">
    <original>K</original>
    <variation>L</variation>
    <location>
        <position position="134"/>
    </location>
</feature>
<feature type="sequence conflict" description="In Ref. 4; AA sequence." evidence="10" ref="4">
    <location>
        <position position="152"/>
    </location>
</feature>
<feature type="sequence conflict" description="In Ref. 4; AA sequence." evidence="10" ref="4">
    <original>R</original>
    <variation>V</variation>
    <location>
        <position position="327"/>
    </location>
</feature>
<feature type="sequence conflict" description="In Ref. 4; AA sequence." evidence="10" ref="4">
    <location>
        <position position="333"/>
    </location>
</feature>
<feature type="strand" evidence="17">
    <location>
        <begin position="4"/>
        <end position="11"/>
    </location>
</feature>
<feature type="helix" evidence="17">
    <location>
        <begin position="15"/>
        <end position="26"/>
    </location>
</feature>
<feature type="strand" evidence="17">
    <location>
        <begin position="30"/>
        <end position="39"/>
    </location>
</feature>
<feature type="strand" evidence="17">
    <location>
        <begin position="41"/>
        <end position="46"/>
    </location>
</feature>
<feature type="turn" evidence="18">
    <location>
        <begin position="54"/>
        <end position="57"/>
    </location>
</feature>
<feature type="helix" evidence="17">
    <location>
        <begin position="59"/>
        <end position="64"/>
    </location>
</feature>
<feature type="helix" evidence="17">
    <location>
        <begin position="73"/>
        <end position="80"/>
    </location>
</feature>
<feature type="strand" evidence="17">
    <location>
        <begin position="87"/>
        <end position="91"/>
    </location>
</feature>
<feature type="helix" evidence="17">
    <location>
        <begin position="96"/>
        <end position="99"/>
    </location>
</feature>
<feature type="helix" evidence="17">
    <location>
        <begin position="102"/>
        <end position="107"/>
    </location>
</feature>
<feature type="strand" evidence="17">
    <location>
        <begin position="111"/>
        <end position="113"/>
    </location>
</feature>
<feature type="helix" evidence="17">
    <location>
        <begin position="118"/>
        <end position="120"/>
    </location>
</feature>
<feature type="helix" evidence="17">
    <location>
        <begin position="124"/>
        <end position="130"/>
    </location>
</feature>
<feature type="strand" evidence="18">
    <location>
        <begin position="135"/>
        <end position="137"/>
    </location>
</feature>
<feature type="helix" evidence="17">
    <location>
        <begin position="143"/>
        <end position="145"/>
    </location>
</feature>
<feature type="turn" evidence="17">
    <location>
        <begin position="146"/>
        <end position="149"/>
    </location>
</feature>
<feature type="strand" evidence="18">
    <location>
        <begin position="150"/>
        <end position="152"/>
    </location>
</feature>
<feature type="helix" evidence="17">
    <location>
        <begin position="153"/>
        <end position="162"/>
    </location>
</feature>
<feature type="strand" evidence="17">
    <location>
        <begin position="166"/>
        <end position="172"/>
    </location>
</feature>
<feature type="helix" evidence="17">
    <location>
        <begin position="175"/>
        <end position="184"/>
    </location>
</feature>
<feature type="helix" evidence="17">
    <location>
        <begin position="194"/>
        <end position="204"/>
    </location>
</feature>
<feature type="helix" evidence="17">
    <location>
        <begin position="212"/>
        <end position="215"/>
    </location>
</feature>
<feature type="helix" evidence="17">
    <location>
        <begin position="218"/>
        <end position="230"/>
    </location>
</feature>
<feature type="helix" evidence="17">
    <location>
        <begin position="249"/>
        <end position="251"/>
    </location>
</feature>
<feature type="strand" evidence="19">
    <location>
        <begin position="255"/>
        <end position="257"/>
    </location>
</feature>
<feature type="helix" evidence="17">
    <location>
        <begin position="258"/>
        <end position="264"/>
    </location>
</feature>
<feature type="helix" evidence="17">
    <location>
        <begin position="265"/>
        <end position="267"/>
    </location>
</feature>
<feature type="helix" evidence="17">
    <location>
        <begin position="268"/>
        <end position="278"/>
    </location>
</feature>
<feature type="turn" evidence="17">
    <location>
        <begin position="279"/>
        <end position="282"/>
    </location>
</feature>
<feature type="strand" evidence="17">
    <location>
        <begin position="283"/>
        <end position="292"/>
    </location>
</feature>
<feature type="turn" evidence="17">
    <location>
        <begin position="293"/>
        <end position="296"/>
    </location>
</feature>
<feature type="strand" evidence="17">
    <location>
        <begin position="297"/>
        <end position="309"/>
    </location>
</feature>
<feature type="helix" evidence="17">
    <location>
        <begin position="310"/>
        <end position="313"/>
    </location>
</feature>
<feature type="strand" evidence="17">
    <location>
        <begin position="319"/>
        <end position="327"/>
    </location>
</feature>
<feature type="strand" evidence="17">
    <location>
        <begin position="332"/>
        <end position="336"/>
    </location>
</feature>
<feature type="helix" evidence="17">
    <location>
        <begin position="341"/>
        <end position="358"/>
    </location>
</feature>
<keyword id="KW-0002">3D-structure</keyword>
<keyword id="KW-0028">Amino-acid biosynthesis</keyword>
<keyword id="KW-0903">Direct protein sequencing</keyword>
<keyword id="KW-1017">Isopeptide bond</keyword>
<keyword id="KW-0486">Methionine biosynthesis</keyword>
<keyword id="KW-0521">NADP</keyword>
<keyword id="KW-0560">Oxidoreductase</keyword>
<keyword id="KW-1185">Reference proteome</keyword>
<keyword id="KW-0791">Threonine biosynthesis</keyword>
<keyword id="KW-0832">Ubl conjugation</keyword>